<organism>
    <name type="scientific">Xenopus laevis</name>
    <name type="common">African clawed frog</name>
    <dbReference type="NCBI Taxonomy" id="8355"/>
    <lineage>
        <taxon>Eukaryota</taxon>
        <taxon>Metazoa</taxon>
        <taxon>Chordata</taxon>
        <taxon>Craniata</taxon>
        <taxon>Vertebrata</taxon>
        <taxon>Euteleostomi</taxon>
        <taxon>Amphibia</taxon>
        <taxon>Batrachia</taxon>
        <taxon>Anura</taxon>
        <taxon>Pipoidea</taxon>
        <taxon>Pipidae</taxon>
        <taxon>Xenopodinae</taxon>
        <taxon>Xenopus</taxon>
        <taxon>Xenopus</taxon>
    </lineage>
</organism>
<dbReference type="EMBL" id="AB259777">
    <property type="protein sequence ID" value="BAG06159.1"/>
    <property type="molecule type" value="mRNA"/>
</dbReference>
<dbReference type="SMR" id="B0I1G7"/>
<dbReference type="KEGG" id="xla:100137717"/>
<dbReference type="CTD" id="100137717"/>
<dbReference type="OrthoDB" id="9946337at2759"/>
<dbReference type="Proteomes" id="UP000186698">
    <property type="component" value="Chromosome 2L"/>
</dbReference>
<dbReference type="Bgee" id="100137717">
    <property type="expression patterns" value="Expressed in ovary"/>
</dbReference>
<dbReference type="GO" id="GO:0005634">
    <property type="term" value="C:nucleus"/>
    <property type="evidence" value="ECO:0000318"/>
    <property type="project" value="GO_Central"/>
</dbReference>
<dbReference type="GO" id="GO:0000987">
    <property type="term" value="F:cis-regulatory region sequence-specific DNA binding"/>
    <property type="evidence" value="ECO:0000314"/>
    <property type="project" value="UniProtKB"/>
</dbReference>
<dbReference type="GO" id="GO:0000981">
    <property type="term" value="F:DNA-binding transcription factor activity, RNA polymerase II-specific"/>
    <property type="evidence" value="ECO:0000318"/>
    <property type="project" value="GO_Central"/>
</dbReference>
<dbReference type="GO" id="GO:0046872">
    <property type="term" value="F:metal ion binding"/>
    <property type="evidence" value="ECO:0007669"/>
    <property type="project" value="UniProtKB-KW"/>
</dbReference>
<dbReference type="GO" id="GO:0000978">
    <property type="term" value="F:RNA polymerase II cis-regulatory region sequence-specific DNA binding"/>
    <property type="evidence" value="ECO:0000318"/>
    <property type="project" value="GO_Central"/>
</dbReference>
<dbReference type="GO" id="GO:0030154">
    <property type="term" value="P:cell differentiation"/>
    <property type="evidence" value="ECO:0007669"/>
    <property type="project" value="UniProtKB-KW"/>
</dbReference>
<dbReference type="GO" id="GO:0008585">
    <property type="term" value="P:female gonad development"/>
    <property type="evidence" value="ECO:0000315"/>
    <property type="project" value="UniProtKB"/>
</dbReference>
<dbReference type="GO" id="GO:0030237">
    <property type="term" value="P:female sex determination"/>
    <property type="evidence" value="ECO:0000315"/>
    <property type="project" value="UniProtKB"/>
</dbReference>
<dbReference type="GO" id="GO:0046660">
    <property type="term" value="P:female sex differentiation"/>
    <property type="evidence" value="ECO:0000315"/>
    <property type="project" value="UniProtKB"/>
</dbReference>
<dbReference type="GO" id="GO:0000122">
    <property type="term" value="P:negative regulation of transcription by RNA polymerase II"/>
    <property type="evidence" value="ECO:0000314"/>
    <property type="project" value="UniProtKB"/>
</dbReference>
<dbReference type="GO" id="GO:0006357">
    <property type="term" value="P:regulation of transcription by RNA polymerase II"/>
    <property type="evidence" value="ECO:0000318"/>
    <property type="project" value="GO_Central"/>
</dbReference>
<dbReference type="GO" id="GO:0007548">
    <property type="term" value="P:sex differentiation"/>
    <property type="evidence" value="ECO:0000318"/>
    <property type="project" value="GO_Central"/>
</dbReference>
<dbReference type="FunFam" id="4.10.1040.10:FF:000001">
    <property type="entry name" value="doublesex- and mab-3-related transcription factor 1"/>
    <property type="match status" value="1"/>
</dbReference>
<dbReference type="Gene3D" id="4.10.1040.10">
    <property type="entry name" value="DM DNA-binding domain"/>
    <property type="match status" value="1"/>
</dbReference>
<dbReference type="InterPro" id="IPR001275">
    <property type="entry name" value="DM_DNA-bd"/>
</dbReference>
<dbReference type="InterPro" id="IPR036407">
    <property type="entry name" value="DM_DNA-bd_sf"/>
</dbReference>
<dbReference type="InterPro" id="IPR026607">
    <property type="entry name" value="DMRT"/>
</dbReference>
<dbReference type="InterPro" id="IPR022114">
    <property type="entry name" value="DMRT1-like"/>
</dbReference>
<dbReference type="PANTHER" id="PTHR12322">
    <property type="entry name" value="DOUBLESEX AND MAB-3 RELATED TRANSCRIPTION FACTOR DMRT"/>
    <property type="match status" value="1"/>
</dbReference>
<dbReference type="PANTHER" id="PTHR12322:SF70">
    <property type="entry name" value="DOUBLESEX- AND MAB-3-RELATED TRANSCRIPTION FACTOR 1"/>
    <property type="match status" value="1"/>
</dbReference>
<dbReference type="Pfam" id="PF00751">
    <property type="entry name" value="DM"/>
    <property type="match status" value="1"/>
</dbReference>
<dbReference type="Pfam" id="PF12374">
    <property type="entry name" value="Dmrt1"/>
    <property type="match status" value="1"/>
</dbReference>
<dbReference type="SMART" id="SM00301">
    <property type="entry name" value="DM"/>
    <property type="match status" value="1"/>
</dbReference>
<dbReference type="SUPFAM" id="SSF82927">
    <property type="entry name" value="Cysteine-rich DNA binding domain, (DM domain)"/>
    <property type="match status" value="1"/>
</dbReference>
<dbReference type="PROSITE" id="PS40000">
    <property type="entry name" value="DM_1"/>
    <property type="match status" value="1"/>
</dbReference>
<dbReference type="PROSITE" id="PS50809">
    <property type="entry name" value="DM_2"/>
    <property type="match status" value="1"/>
</dbReference>
<reference key="1">
    <citation type="journal article" date="2008" name="Proc. Natl. Acad. Sci. U.S.A.">
        <title>A W-linked DM-domain gene, DM-W, participates in primary ovary development in Xenopus laevis.</title>
        <authorList>
            <person name="Yoshimoto S."/>
            <person name="Okada E."/>
            <person name="Umemoto H."/>
            <person name="Tamura K."/>
            <person name="Uno Y."/>
            <person name="Nishida-Umehara C."/>
            <person name="Matsuda Y."/>
            <person name="Takamatsu N."/>
            <person name="Shiba T."/>
            <person name="Ito M."/>
        </authorList>
    </citation>
    <scope>NUCLEOTIDE SEQUENCE [MRNA]</scope>
    <scope>FUNCTION</scope>
    <scope>TISSUE SPECIFICITY</scope>
    <scope>DEVELOPMENTAL STAGE</scope>
    <source>
        <tissue>Gonad</tissue>
    </source>
</reference>
<reference key="2">
    <citation type="journal article" date="2010" name="Development">
        <title>Opposite roles of DMRT1 and its W-linked paralogue, DM-W, in sexual dimorphism of Xenopus laevis: implications of a ZZ/ZW-type sex-determining system.</title>
        <authorList>
            <person name="Yoshimoto S."/>
            <person name="Ikeda N."/>
            <person name="Izutsu Y."/>
            <person name="Shiba T."/>
            <person name="Takamatsu N."/>
            <person name="Ito M."/>
        </authorList>
    </citation>
    <scope>FUNCTION</scope>
    <scope>DNA-BINDING</scope>
    <scope>TISSUE SPECIFICITY</scope>
</reference>
<name>DMW_XENLA</name>
<evidence type="ECO:0000255" key="1">
    <source>
        <dbReference type="PROSITE-ProRule" id="PRU00070"/>
    </source>
</evidence>
<evidence type="ECO:0000256" key="2">
    <source>
        <dbReference type="SAM" id="MobiDB-lite"/>
    </source>
</evidence>
<evidence type="ECO:0000269" key="3">
    <source>
    </source>
</evidence>
<evidence type="ECO:0000269" key="4">
    <source>
    </source>
</evidence>
<evidence type="ECO:0000305" key="5"/>
<sequence>MQNNEEPYNTGQYPSGPHGKKSPRLHKCARCRNHGYATPLKGHKRFCIWRDCQCQKCSLITERQRVIAAQVALQRQQAQEEELGIYHPIPLPIAAVIKREHGGSSSQLMLESSSTQTTSTPTSAEWIKEEEVAKPAAGLFAPPPSSEEMGMTLAAVGAADAATQTDQPGHLFNMMSAMIQQLMDMSWELQQGWI</sequence>
<gene>
    <name type="primary">dm-w</name>
</gene>
<keyword id="KW-0217">Developmental protein</keyword>
<keyword id="KW-0221">Differentiation</keyword>
<keyword id="KW-0238">DNA-binding</keyword>
<keyword id="KW-0479">Metal-binding</keyword>
<keyword id="KW-0539">Nucleus</keyword>
<keyword id="KW-1185">Reference proteome</keyword>
<keyword id="KW-0726">Sexual differentiation</keyword>
<keyword id="KW-0804">Transcription</keyword>
<keyword id="KW-0805">Transcription regulation</keyword>
<keyword id="KW-0862">Zinc</keyword>
<feature type="chain" id="PRO_0000416902" description="Doublesex- and mab-3-related transcription factor DM-W">
    <location>
        <begin position="1"/>
        <end position="194"/>
    </location>
</feature>
<feature type="DNA-binding region" description="DM" evidence="1">
    <location>
        <begin position="28"/>
        <end position="75"/>
    </location>
</feature>
<feature type="region of interest" description="Disordered" evidence="2">
    <location>
        <begin position="1"/>
        <end position="23"/>
    </location>
</feature>
<feature type="compositionally biased region" description="Polar residues" evidence="2">
    <location>
        <begin position="1"/>
        <end position="13"/>
    </location>
</feature>
<protein>
    <recommendedName>
        <fullName>Doublesex- and mab-3-related transcription factor DM-W</fullName>
    </recommendedName>
    <alternativeName>
        <fullName>W-linked doublesex- and mab-3-related transcription factor</fullName>
        <shortName>xDM-W</shortName>
    </alternativeName>
</protein>
<accession>B0I1G7</accession>
<comment type="function">
    <text evidence="3 4">Transcription factor that plays a key role in female sex determination and primary ovary development. Acts as a sex-determining protein by antagonizing the transcriptional activity of male-determination protein dmrt1-a, acting as a dominant-negative type protein.</text>
</comment>
<comment type="subcellular location">
    <subcellularLocation>
        <location evidence="1">Nucleus</location>
    </subcellularLocation>
</comment>
<comment type="tissue specificity">
    <text evidence="3 4">Expressed exclusively in the primordial gonads of ZW tadpoles. Specifically expressed in the somatic cells surrounding primordial germ cells in a ZW gonad at stage 50 during sex determination (at protein level).</text>
</comment>
<comment type="developmental stage">
    <text evidence="3">Barely detectable at stage 52 in the ZW gonads.</text>
</comment>
<comment type="similarity">
    <text evidence="5">Belongs to the DMRT family.</text>
</comment>
<proteinExistence type="evidence at protein level"/>